<dbReference type="EC" id="3.6.1.9" evidence="1"/>
<dbReference type="EMBL" id="AP008229">
    <property type="protein sequence ID" value="BAE69886.1"/>
    <property type="molecule type" value="Genomic_DNA"/>
</dbReference>
<dbReference type="RefSeq" id="WP_011409098.1">
    <property type="nucleotide sequence ID" value="NC_007705.1"/>
</dbReference>
<dbReference type="SMR" id="Q2P0P1"/>
<dbReference type="KEGG" id="xom:XOO3131"/>
<dbReference type="HOGENOM" id="CLU_040416_2_1_6"/>
<dbReference type="GO" id="GO:0005737">
    <property type="term" value="C:cytoplasm"/>
    <property type="evidence" value="ECO:0007669"/>
    <property type="project" value="UniProtKB-SubCell"/>
</dbReference>
<dbReference type="GO" id="GO:0036218">
    <property type="term" value="F:dTTP diphosphatase activity"/>
    <property type="evidence" value="ECO:0007669"/>
    <property type="project" value="RHEA"/>
</dbReference>
<dbReference type="GO" id="GO:0036221">
    <property type="term" value="F:UTP diphosphatase activity"/>
    <property type="evidence" value="ECO:0007669"/>
    <property type="project" value="RHEA"/>
</dbReference>
<dbReference type="GO" id="GO:0009117">
    <property type="term" value="P:nucleotide metabolic process"/>
    <property type="evidence" value="ECO:0007669"/>
    <property type="project" value="UniProtKB-KW"/>
</dbReference>
<dbReference type="CDD" id="cd00555">
    <property type="entry name" value="Maf"/>
    <property type="match status" value="1"/>
</dbReference>
<dbReference type="Gene3D" id="3.90.950.10">
    <property type="match status" value="1"/>
</dbReference>
<dbReference type="HAMAP" id="MF_00528">
    <property type="entry name" value="Maf"/>
    <property type="match status" value="1"/>
</dbReference>
<dbReference type="InterPro" id="IPR029001">
    <property type="entry name" value="ITPase-like_fam"/>
</dbReference>
<dbReference type="InterPro" id="IPR003697">
    <property type="entry name" value="Maf-like"/>
</dbReference>
<dbReference type="NCBIfam" id="TIGR00172">
    <property type="entry name" value="maf"/>
    <property type="match status" value="1"/>
</dbReference>
<dbReference type="NCBIfam" id="NF003403">
    <property type="entry name" value="PRK04694.1"/>
    <property type="match status" value="1"/>
</dbReference>
<dbReference type="PANTHER" id="PTHR43213">
    <property type="entry name" value="BIFUNCTIONAL DTTP/UTP PYROPHOSPHATASE/METHYLTRANSFERASE PROTEIN-RELATED"/>
    <property type="match status" value="1"/>
</dbReference>
<dbReference type="PANTHER" id="PTHR43213:SF5">
    <property type="entry name" value="BIFUNCTIONAL DTTP_UTP PYROPHOSPHATASE_METHYLTRANSFERASE PROTEIN-RELATED"/>
    <property type="match status" value="1"/>
</dbReference>
<dbReference type="Pfam" id="PF02545">
    <property type="entry name" value="Maf"/>
    <property type="match status" value="1"/>
</dbReference>
<dbReference type="PIRSF" id="PIRSF006305">
    <property type="entry name" value="Maf"/>
    <property type="match status" value="1"/>
</dbReference>
<dbReference type="SUPFAM" id="SSF52972">
    <property type="entry name" value="ITPase-like"/>
    <property type="match status" value="1"/>
</dbReference>
<comment type="function">
    <text evidence="1">Nucleoside triphosphate pyrophosphatase that hydrolyzes dTTP and UTP. May have a dual role in cell division arrest and in preventing the incorporation of modified nucleotides into cellular nucleic acids.</text>
</comment>
<comment type="catalytic activity">
    <reaction evidence="1">
        <text>dTTP + H2O = dTMP + diphosphate + H(+)</text>
        <dbReference type="Rhea" id="RHEA:28534"/>
        <dbReference type="ChEBI" id="CHEBI:15377"/>
        <dbReference type="ChEBI" id="CHEBI:15378"/>
        <dbReference type="ChEBI" id="CHEBI:33019"/>
        <dbReference type="ChEBI" id="CHEBI:37568"/>
        <dbReference type="ChEBI" id="CHEBI:63528"/>
        <dbReference type="EC" id="3.6.1.9"/>
    </reaction>
</comment>
<comment type="catalytic activity">
    <reaction evidence="1">
        <text>UTP + H2O = UMP + diphosphate + H(+)</text>
        <dbReference type="Rhea" id="RHEA:29395"/>
        <dbReference type="ChEBI" id="CHEBI:15377"/>
        <dbReference type="ChEBI" id="CHEBI:15378"/>
        <dbReference type="ChEBI" id="CHEBI:33019"/>
        <dbReference type="ChEBI" id="CHEBI:46398"/>
        <dbReference type="ChEBI" id="CHEBI:57865"/>
        <dbReference type="EC" id="3.6.1.9"/>
    </reaction>
</comment>
<comment type="cofactor">
    <cofactor evidence="1">
        <name>a divalent metal cation</name>
        <dbReference type="ChEBI" id="CHEBI:60240"/>
    </cofactor>
</comment>
<comment type="subcellular location">
    <subcellularLocation>
        <location evidence="1">Cytoplasm</location>
    </subcellularLocation>
</comment>
<comment type="similarity">
    <text evidence="1">Belongs to the Maf family. YhdE subfamily.</text>
</comment>
<proteinExistence type="inferred from homology"/>
<sequence>MLYLASRSPRRQELLQRLDVPFQTVQLDVPELRAADESPDHYVQRVALDKAHAGLALVQAADPDAIVLGSDTEVVLGERVFGKPVDVDDAIAMLRALSGRTHQVLTAVVLVCAQRAPAQALVVSEVTFDRLDDAQIAAYAACGEPMGKAGAYAIQGRAERFIRHLSGSYSGVMGLPLYHTSQLLTAFGAH</sequence>
<evidence type="ECO:0000255" key="1">
    <source>
        <dbReference type="HAMAP-Rule" id="MF_00528"/>
    </source>
</evidence>
<name>NTPPA_XANOM</name>
<accession>Q2P0P1</accession>
<keyword id="KW-0963">Cytoplasm</keyword>
<keyword id="KW-0378">Hydrolase</keyword>
<keyword id="KW-0546">Nucleotide metabolism</keyword>
<feature type="chain" id="PRO_0000267471" description="dTTP/UTP pyrophosphatase">
    <location>
        <begin position="1"/>
        <end position="190"/>
    </location>
</feature>
<feature type="active site" description="Proton acceptor" evidence="1">
    <location>
        <position position="71"/>
    </location>
</feature>
<feature type="site" description="Important for substrate specificity" evidence="1">
    <location>
        <position position="10"/>
    </location>
</feature>
<feature type="site" description="Important for substrate specificity" evidence="1">
    <location>
        <position position="72"/>
    </location>
</feature>
<feature type="site" description="Important for substrate specificity" evidence="1">
    <location>
        <position position="155"/>
    </location>
</feature>
<reference key="1">
    <citation type="journal article" date="2005" name="Jpn. Agric. Res. Q.">
        <title>Genome sequence of Xanthomonas oryzae pv. oryzae suggests contribution of large numbers of effector genes and insertion sequences to its race diversity.</title>
        <authorList>
            <person name="Ochiai H."/>
            <person name="Inoue Y."/>
            <person name="Takeya M."/>
            <person name="Sasaki A."/>
            <person name="Kaku H."/>
        </authorList>
    </citation>
    <scope>NUCLEOTIDE SEQUENCE [LARGE SCALE GENOMIC DNA]</scope>
    <source>
        <strain>MAFF 311018</strain>
    </source>
</reference>
<organism>
    <name type="scientific">Xanthomonas oryzae pv. oryzae (strain MAFF 311018)</name>
    <dbReference type="NCBI Taxonomy" id="342109"/>
    <lineage>
        <taxon>Bacteria</taxon>
        <taxon>Pseudomonadati</taxon>
        <taxon>Pseudomonadota</taxon>
        <taxon>Gammaproteobacteria</taxon>
        <taxon>Lysobacterales</taxon>
        <taxon>Lysobacteraceae</taxon>
        <taxon>Xanthomonas</taxon>
    </lineage>
</organism>
<gene>
    <name type="ordered locus">XOO3131</name>
</gene>
<protein>
    <recommendedName>
        <fullName evidence="1">dTTP/UTP pyrophosphatase</fullName>
        <shortName evidence="1">dTTPase/UTPase</shortName>
        <ecNumber evidence="1">3.6.1.9</ecNumber>
    </recommendedName>
    <alternativeName>
        <fullName evidence="1">Nucleoside triphosphate pyrophosphatase</fullName>
    </alternativeName>
    <alternativeName>
        <fullName evidence="1">Nucleotide pyrophosphatase</fullName>
        <shortName evidence="1">Nucleotide PPase</shortName>
    </alternativeName>
</protein>